<protein>
    <recommendedName>
        <fullName>Metalloprotease TIKI1</fullName>
        <ecNumber>3.4.-.-</ecNumber>
    </recommendedName>
    <alternativeName>
        <fullName>TRAB domain-containing protein 2A</fullName>
    </alternativeName>
</protein>
<proteinExistence type="evidence at transcript level"/>
<sequence>MVIIWNIFLPAFLLVLAKASLRSSRDSANCKLNKKQSQLNSFLWTIKRDPPSYFFGTIHVPYTRVWDFIPENSKTAFQQSNIVYFELDLTDPYTISALTSCQMLPQGENLQNVLPRDIYRRLKRHLEYVKLMMPSWMTPDQRGKGLYADYLFNAIAGNWERKRPVWVMLMVNSLTEVDIKSRGVPVLDLYLAQEAERLKKRTGAVEQVEEQCHPLNGLNLSQVIFALNQTLLQQENLRAGSVQVPYSTEDLIKHYNCGDLNSIIFNHDSSQVPNFINSTLPPQERITAQEIDNYFRQELIYKRNERMGKRVKDLLEQFPEKSFFFAFGAGHFLGNNTVIDVLKRYGYDVLHTPAGRSIINNGKGKKNLLPSKFSSSSLPVGLSAPPCTVTSRIKQSINSHKDQESLPDILLDDDIDQLDKDERKYKKRKQRKEKHRHFSDLWVRIQESSTDTTPQIRIINGYITVEPHPREHGKDKYIKAAQSVSFSLSIPSAFLLLAWCFQQVAVLQ</sequence>
<feature type="signal peptide" evidence="2">
    <location>
        <begin position="1"/>
        <end position="23"/>
    </location>
</feature>
<feature type="chain" id="PRO_0000419451" description="Metalloprotease TIKI1">
    <location>
        <begin position="24"/>
        <end position="508"/>
    </location>
</feature>
<feature type="topological domain" description="Extracellular" evidence="2">
    <location>
        <begin position="24"/>
        <end position="485"/>
    </location>
</feature>
<feature type="transmembrane region" description="Helical" evidence="2">
    <location>
        <begin position="486"/>
        <end position="506"/>
    </location>
</feature>
<feature type="topological domain" description="Cytoplasmic" evidence="2">
    <location>
        <begin position="507"/>
        <end position="508"/>
    </location>
</feature>
<feature type="glycosylation site" description="N-linked (GlcNAc...) asparagine" evidence="2">
    <location>
        <position position="219"/>
    </location>
</feature>
<feature type="glycosylation site" description="N-linked (GlcNAc...) asparagine" evidence="2">
    <location>
        <position position="228"/>
    </location>
</feature>
<feature type="glycosylation site" description="N-linked (GlcNAc...) asparagine" evidence="2">
    <location>
        <position position="277"/>
    </location>
</feature>
<feature type="glycosylation site" description="N-linked (GlcNAc...) asparagine" evidence="2">
    <location>
        <position position="335"/>
    </location>
</feature>
<comment type="function">
    <text evidence="3">Metalloprotease that acts as a negative regulator of the Wnt signaling pathway: expressed in the Spemann-Mangold organizer and is required for anterior-neural patterning in head formation in embryos. Acts by mediating the cleavage of the N-terminal residues of a subset of Wnt proteins. Following cleavage, Wnt proteins become oxidized and form large disulfide-bond oligomers, leading to their inactivation. Able to cleave wnt8.</text>
</comment>
<comment type="cofactor">
    <cofactor evidence="1">
        <name>Mn(2+)</name>
        <dbReference type="ChEBI" id="CHEBI:29035"/>
    </cofactor>
    <cofactor evidence="1">
        <name>Co(2+)</name>
        <dbReference type="ChEBI" id="CHEBI:48828"/>
    </cofactor>
    <text evidence="1">Divalent metal cations. Mn(2+) or Co(2+).</text>
</comment>
<comment type="subcellular location">
    <subcellularLocation>
        <location evidence="1">Cell membrane</location>
        <topology evidence="1">Single-pass type I membrane protein</topology>
    </subcellularLocation>
</comment>
<comment type="tissue specificity">
    <text evidence="3">Zygotically expressed in the Spemann-Mangold organizer, in particular in the head Spemann-Mangold organizer region responsible for anterior patterning.</text>
</comment>
<comment type="developmental stage">
    <text evidence="3">Detectable at stage 9 and prominently expressed from stage 10 (early gastrula) to stage 30 (tadpole). Restricted to the dorsal segment of the gastrula. At stage 10, expressed exclusively in the dorsal blastopore lip and the Spemann-Mangold organizer. Excluded from the dorsal margin of the Spemann-Mangold organizer. At stage 11, expressed in the anterior prechordal plate. By blastopore closure, expression restricted to the anterior midline. At early neurula, expressed in the midline anterior to the tip of the notochord in cells of the endoderm and overlying neural ectoderm.</text>
</comment>
<comment type="miscellaneous">
    <text evidence="5">Was named TIKI in reference to large-headed humanoid in Polynesian mythology.</text>
</comment>
<comment type="similarity">
    <text evidence="4">Belongs to the TIKI family.</text>
</comment>
<gene>
    <name type="primary">trabd2a</name>
    <name type="synonym">tiki1</name>
</gene>
<evidence type="ECO:0000250" key="1"/>
<evidence type="ECO:0000255" key="2"/>
<evidence type="ECO:0000269" key="3">
    <source>
    </source>
</evidence>
<evidence type="ECO:0000305" key="4"/>
<evidence type="ECO:0000305" key="5">
    <source>
    </source>
</evidence>
<dbReference type="EC" id="3.4.-.-"/>
<dbReference type="EMBL" id="JQ653417">
    <property type="protein sequence ID" value="AFN02883.1"/>
    <property type="molecule type" value="mRNA"/>
</dbReference>
<dbReference type="EMBL" id="AAMC01056565">
    <property type="status" value="NOT_ANNOTATED_CDS"/>
    <property type="molecule type" value="Genomic_DNA"/>
</dbReference>
<dbReference type="EMBL" id="AAMC01056566">
    <property type="status" value="NOT_ANNOTATED_CDS"/>
    <property type="molecule type" value="Genomic_DNA"/>
</dbReference>
<dbReference type="RefSeq" id="NP_001269420.1">
    <property type="nucleotide sequence ID" value="NM_001282491.1"/>
</dbReference>
<dbReference type="FunCoup" id="F6PTN1">
    <property type="interactions" value="137"/>
</dbReference>
<dbReference type="GlyCosmos" id="F6PTN1">
    <property type="glycosylation" value="4 sites, No reported glycans"/>
</dbReference>
<dbReference type="PaxDb" id="8364-ENSXETP00000028687"/>
<dbReference type="GeneID" id="100491951"/>
<dbReference type="KEGG" id="xtr:100491951"/>
<dbReference type="CTD" id="129293"/>
<dbReference type="eggNOG" id="ENOG502QPR1">
    <property type="taxonomic scope" value="Eukaryota"/>
</dbReference>
<dbReference type="InParanoid" id="F6PTN1"/>
<dbReference type="OrthoDB" id="10040378at2759"/>
<dbReference type="Proteomes" id="UP000008143">
    <property type="component" value="Chromosome 1"/>
</dbReference>
<dbReference type="GO" id="GO:0031090">
    <property type="term" value="C:organelle membrane"/>
    <property type="evidence" value="ECO:0000250"/>
    <property type="project" value="UniProtKB"/>
</dbReference>
<dbReference type="GO" id="GO:0005886">
    <property type="term" value="C:plasma membrane"/>
    <property type="evidence" value="ECO:0000250"/>
    <property type="project" value="UniProtKB"/>
</dbReference>
<dbReference type="GO" id="GO:0046872">
    <property type="term" value="F:metal ion binding"/>
    <property type="evidence" value="ECO:0007669"/>
    <property type="project" value="UniProtKB-KW"/>
</dbReference>
<dbReference type="GO" id="GO:0004222">
    <property type="term" value="F:metalloendopeptidase activity"/>
    <property type="evidence" value="ECO:0000250"/>
    <property type="project" value="ParkinsonsUK-UCL"/>
</dbReference>
<dbReference type="GO" id="GO:0017147">
    <property type="term" value="F:Wnt-protein binding"/>
    <property type="evidence" value="ECO:0000314"/>
    <property type="project" value="UniProtKB"/>
</dbReference>
<dbReference type="GO" id="GO:0060322">
    <property type="term" value="P:head development"/>
    <property type="evidence" value="ECO:0000315"/>
    <property type="project" value="UniProtKB"/>
</dbReference>
<dbReference type="GO" id="GO:0030178">
    <property type="term" value="P:negative regulation of Wnt signaling pathway"/>
    <property type="evidence" value="ECO:0000315"/>
    <property type="project" value="UniProtKB"/>
</dbReference>
<dbReference type="GO" id="GO:0006508">
    <property type="term" value="P:proteolysis"/>
    <property type="evidence" value="ECO:0000250"/>
    <property type="project" value="ParkinsonsUK-UCL"/>
</dbReference>
<dbReference type="GO" id="GO:0016055">
    <property type="term" value="P:Wnt signaling pathway"/>
    <property type="evidence" value="ECO:0007669"/>
    <property type="project" value="UniProtKB-KW"/>
</dbReference>
<dbReference type="CDD" id="cd14789">
    <property type="entry name" value="Tiki"/>
    <property type="match status" value="1"/>
</dbReference>
<dbReference type="InterPro" id="IPR040230">
    <property type="entry name" value="TIKI1/2-like"/>
</dbReference>
<dbReference type="InterPro" id="IPR002816">
    <property type="entry name" value="TraB/PrgY/GumN_fam"/>
</dbReference>
<dbReference type="PANTHER" id="PTHR31120">
    <property type="entry name" value="METALLOPROTEASE TIKI"/>
    <property type="match status" value="1"/>
</dbReference>
<dbReference type="PANTHER" id="PTHR31120:SF7">
    <property type="entry name" value="METALLOPROTEASE TIKI1"/>
    <property type="match status" value="1"/>
</dbReference>
<dbReference type="Pfam" id="PF01963">
    <property type="entry name" value="TraB_PrgY_gumN"/>
    <property type="match status" value="1"/>
</dbReference>
<name>TIKI1_XENTR</name>
<organism>
    <name type="scientific">Xenopus tropicalis</name>
    <name type="common">Western clawed frog</name>
    <name type="synonym">Silurana tropicalis</name>
    <dbReference type="NCBI Taxonomy" id="8364"/>
    <lineage>
        <taxon>Eukaryota</taxon>
        <taxon>Metazoa</taxon>
        <taxon>Chordata</taxon>
        <taxon>Craniata</taxon>
        <taxon>Vertebrata</taxon>
        <taxon>Euteleostomi</taxon>
        <taxon>Amphibia</taxon>
        <taxon>Batrachia</taxon>
        <taxon>Anura</taxon>
        <taxon>Pipoidea</taxon>
        <taxon>Pipidae</taxon>
        <taxon>Xenopodinae</taxon>
        <taxon>Xenopus</taxon>
        <taxon>Silurana</taxon>
    </lineage>
</organism>
<reference key="1">
    <citation type="journal article" date="2012" name="Cell">
        <title>Tiki1 is required for head formation via Wnt cleavage-oxidation and inactivation.</title>
        <authorList>
            <person name="Zhang X."/>
            <person name="Abreu J.G."/>
            <person name="Yokota C."/>
            <person name="Macdonald B.T."/>
            <person name="Singh S."/>
            <person name="Coburn K.L."/>
            <person name="Cheong S.M."/>
            <person name="Zhang M.M."/>
            <person name="Ye Q.Z."/>
            <person name="Hang H.C."/>
            <person name="Steen H."/>
            <person name="He X."/>
        </authorList>
    </citation>
    <scope>NUCLEOTIDE SEQUENCE [MRNA]</scope>
    <scope>FUNCTION</scope>
    <scope>TISSUE SPECIFICITY</scope>
    <scope>DEVELOPMENTAL STAGE</scope>
</reference>
<reference key="2">
    <citation type="journal article" date="2010" name="Science">
        <title>The genome of the Western clawed frog Xenopus tropicalis.</title>
        <authorList>
            <person name="Hellsten U."/>
            <person name="Harland R.M."/>
            <person name="Gilchrist M.J."/>
            <person name="Hendrix D."/>
            <person name="Jurka J."/>
            <person name="Kapitonov V."/>
            <person name="Ovcharenko I."/>
            <person name="Putnam N.H."/>
            <person name="Shu S."/>
            <person name="Taher L."/>
            <person name="Blitz I.L."/>
            <person name="Blumberg B."/>
            <person name="Dichmann D.S."/>
            <person name="Dubchak I."/>
            <person name="Amaya E."/>
            <person name="Detter J.C."/>
            <person name="Fletcher R."/>
            <person name="Gerhard D.S."/>
            <person name="Goodstein D."/>
            <person name="Graves T."/>
            <person name="Grigoriev I.V."/>
            <person name="Grimwood J."/>
            <person name="Kawashima T."/>
            <person name="Lindquist E."/>
            <person name="Lucas S.M."/>
            <person name="Mead P.E."/>
            <person name="Mitros T."/>
            <person name="Ogino H."/>
            <person name="Ohta Y."/>
            <person name="Poliakov A.V."/>
            <person name="Pollet N."/>
            <person name="Robert J."/>
            <person name="Salamov A."/>
            <person name="Sater A.K."/>
            <person name="Schmutz J."/>
            <person name="Terry A."/>
            <person name="Vize P.D."/>
            <person name="Warren W.C."/>
            <person name="Wells D."/>
            <person name="Wills A."/>
            <person name="Wilson R.K."/>
            <person name="Zimmerman L.B."/>
            <person name="Zorn A.M."/>
            <person name="Grainger R."/>
            <person name="Grammer T."/>
            <person name="Khokha M.K."/>
            <person name="Richardson P.M."/>
            <person name="Rokhsar D.S."/>
        </authorList>
    </citation>
    <scope>NUCLEOTIDE SEQUENCE [LARGE SCALE GENOMIC DNA]</scope>
</reference>
<keyword id="KW-1003">Cell membrane</keyword>
<keyword id="KW-0325">Glycoprotein</keyword>
<keyword id="KW-0378">Hydrolase</keyword>
<keyword id="KW-0472">Membrane</keyword>
<keyword id="KW-0479">Metal-binding</keyword>
<keyword id="KW-0482">Metalloprotease</keyword>
<keyword id="KW-0645">Protease</keyword>
<keyword id="KW-1185">Reference proteome</keyword>
<keyword id="KW-0732">Signal</keyword>
<keyword id="KW-0812">Transmembrane</keyword>
<keyword id="KW-1133">Transmembrane helix</keyword>
<keyword id="KW-0879">Wnt signaling pathway</keyword>
<accession>F6PTN1</accession>
<accession>I6UYS9</accession>